<proteinExistence type="predicted"/>
<feature type="chain" id="PRO_0000106645" description="Uncharacterized protein MJ0002">
    <location>
        <begin position="1"/>
        <end position="243"/>
    </location>
</feature>
<keyword id="KW-1185">Reference proteome</keyword>
<gene>
    <name type="ordered locus">MJ0002</name>
</gene>
<reference key="1">
    <citation type="journal article" date="1996" name="Science">
        <title>Complete genome sequence of the methanogenic archaeon, Methanococcus jannaschii.</title>
        <authorList>
            <person name="Bult C.J."/>
            <person name="White O."/>
            <person name="Olsen G.J."/>
            <person name="Zhou L."/>
            <person name="Fleischmann R.D."/>
            <person name="Sutton G.G."/>
            <person name="Blake J.A."/>
            <person name="FitzGerald L.M."/>
            <person name="Clayton R.A."/>
            <person name="Gocayne J.D."/>
            <person name="Kerlavage A.R."/>
            <person name="Dougherty B.A."/>
            <person name="Tomb J.-F."/>
            <person name="Adams M.D."/>
            <person name="Reich C.I."/>
            <person name="Overbeek R."/>
            <person name="Kirkness E.F."/>
            <person name="Weinstock K.G."/>
            <person name="Merrick J.M."/>
            <person name="Glodek A."/>
            <person name="Scott J.L."/>
            <person name="Geoghagen N.S.M."/>
            <person name="Weidman J.F."/>
            <person name="Fuhrmann J.L."/>
            <person name="Nguyen D."/>
            <person name="Utterback T.R."/>
            <person name="Kelley J.M."/>
            <person name="Peterson J.D."/>
            <person name="Sadow P.W."/>
            <person name="Hanna M.C."/>
            <person name="Cotton M.D."/>
            <person name="Roberts K.M."/>
            <person name="Hurst M.A."/>
            <person name="Kaine B.P."/>
            <person name="Borodovsky M."/>
            <person name="Klenk H.-P."/>
            <person name="Fraser C.M."/>
            <person name="Smith H.O."/>
            <person name="Woese C.R."/>
            <person name="Venter J.C."/>
        </authorList>
    </citation>
    <scope>NUCLEOTIDE SEQUENCE [LARGE SCALE GENOMIC DNA]</scope>
    <source>
        <strain>ATCC 43067 / DSM 2661 / JAL-1 / JCM 10045 / NBRC 100440</strain>
    </source>
</reference>
<dbReference type="EMBL" id="L77117">
    <property type="protein sequence ID" value="AAB97989.1"/>
    <property type="molecule type" value="Genomic_DNA"/>
</dbReference>
<dbReference type="PIR" id="B64300">
    <property type="entry name" value="B64300"/>
</dbReference>
<dbReference type="STRING" id="243232.MJ_0002"/>
<dbReference type="PaxDb" id="243232-MJ_0002"/>
<dbReference type="EnsemblBacteria" id="AAB97989">
    <property type="protein sequence ID" value="AAB97989"/>
    <property type="gene ID" value="MJ_0002"/>
</dbReference>
<dbReference type="KEGG" id="mja:MJ_0002"/>
<dbReference type="eggNOG" id="arCOG12713">
    <property type="taxonomic scope" value="Archaea"/>
</dbReference>
<dbReference type="HOGENOM" id="CLU_095303_0_0_2"/>
<dbReference type="InParanoid" id="Q60312"/>
<dbReference type="OrthoDB" id="64020at2157"/>
<dbReference type="PhylomeDB" id="Q60312"/>
<dbReference type="Proteomes" id="UP000000805">
    <property type="component" value="Chromosome"/>
</dbReference>
<dbReference type="InterPro" id="IPR018775">
    <property type="entry name" value="RlaP"/>
</dbReference>
<dbReference type="PANTHER" id="PTHR34817">
    <property type="entry name" value="NUCLEOTIDYLTRANSFERASE"/>
    <property type="match status" value="1"/>
</dbReference>
<dbReference type="PANTHER" id="PTHR34817:SF1">
    <property type="entry name" value="NUCLEOTIDYLTRANSFERASE"/>
    <property type="match status" value="1"/>
</dbReference>
<dbReference type="Pfam" id="PF10127">
    <property type="entry name" value="RlaP"/>
    <property type="match status" value="1"/>
</dbReference>
<accession>Q60312</accession>
<sequence>MEIFMEVPIFVVISGSDLYGIPNPSDVDIRGAHILDRELFIKNCLYKSKEEEVINKMFGKCDFVSFELGKFLRELLKPNANFIEIALSDKVLYSSKYHEDVKGIAYNCICKKLYHHWKGFAKPLQKLCEKESYNNPKTLLYILRAYYQGILCLESGEFKSDFSSFRCLDCYDEDIVSYLFECKVNKKPVDESYKKKIKSYFYELGVLLDESYKNSNLIDEPSETAKIKAIELYKKLYFEDVRE</sequence>
<protein>
    <recommendedName>
        <fullName>Uncharacterized protein MJ0002</fullName>
    </recommendedName>
</protein>
<name>Y002_METJA</name>
<organism>
    <name type="scientific">Methanocaldococcus jannaschii (strain ATCC 43067 / DSM 2661 / JAL-1 / JCM 10045 / NBRC 100440)</name>
    <name type="common">Methanococcus jannaschii</name>
    <dbReference type="NCBI Taxonomy" id="243232"/>
    <lineage>
        <taxon>Archaea</taxon>
        <taxon>Methanobacteriati</taxon>
        <taxon>Methanobacteriota</taxon>
        <taxon>Methanomada group</taxon>
        <taxon>Methanococci</taxon>
        <taxon>Methanococcales</taxon>
        <taxon>Methanocaldococcaceae</taxon>
        <taxon>Methanocaldococcus</taxon>
    </lineage>
</organism>